<feature type="chain" id="PRO_0000236540" description="Large ribosomal subunit protein bL9">
    <location>
        <begin position="1"/>
        <end position="187"/>
    </location>
</feature>
<feature type="region of interest" description="Disordered" evidence="2">
    <location>
        <begin position="168"/>
        <end position="187"/>
    </location>
</feature>
<comment type="function">
    <text evidence="1">Binds to the 23S rRNA.</text>
</comment>
<comment type="similarity">
    <text evidence="1">Belongs to the bacterial ribosomal protein bL9 family.</text>
</comment>
<proteinExistence type="inferred from homology"/>
<accession>Q2W5H3</accession>
<reference key="1">
    <citation type="journal article" date="2005" name="DNA Res.">
        <title>Complete genome sequence of the facultative anaerobic magnetotactic bacterium Magnetospirillum sp. strain AMB-1.</title>
        <authorList>
            <person name="Matsunaga T."/>
            <person name="Okamura Y."/>
            <person name="Fukuda Y."/>
            <person name="Wahyudi A.T."/>
            <person name="Murase Y."/>
            <person name="Takeyama H."/>
        </authorList>
    </citation>
    <scope>NUCLEOTIDE SEQUENCE [LARGE SCALE GENOMIC DNA]</scope>
    <source>
        <strain>ATCC 700264 / AMB-1</strain>
    </source>
</reference>
<sequence>MEVILLERIEKLGQMGDVVNVKPGFARNFLLPQKKALRASKANLAFFEKQRVQLEALNLKRRDEAQAVADKMTGLSVLMVRQAGESGMLYGSVSGKDVADAVKAAGFTIERRMVNLDQPIKTLGSYGVRVSLHPEVSVVVTINVARSAEEAERAAAAAAAAAEVVEAEEAPAEEDVAAEETSEAAEA</sequence>
<evidence type="ECO:0000255" key="1">
    <source>
        <dbReference type="HAMAP-Rule" id="MF_00503"/>
    </source>
</evidence>
<evidence type="ECO:0000256" key="2">
    <source>
        <dbReference type="SAM" id="MobiDB-lite"/>
    </source>
</evidence>
<evidence type="ECO:0000305" key="3"/>
<organism>
    <name type="scientific">Paramagnetospirillum magneticum (strain ATCC 700264 / AMB-1)</name>
    <name type="common">Magnetospirillum magneticum</name>
    <dbReference type="NCBI Taxonomy" id="342108"/>
    <lineage>
        <taxon>Bacteria</taxon>
        <taxon>Pseudomonadati</taxon>
        <taxon>Pseudomonadota</taxon>
        <taxon>Alphaproteobacteria</taxon>
        <taxon>Rhodospirillales</taxon>
        <taxon>Magnetospirillaceae</taxon>
        <taxon>Paramagnetospirillum</taxon>
    </lineage>
</organism>
<dbReference type="EMBL" id="AP007255">
    <property type="protein sequence ID" value="BAE50902.1"/>
    <property type="molecule type" value="Genomic_DNA"/>
</dbReference>
<dbReference type="RefSeq" id="WP_011384498.1">
    <property type="nucleotide sequence ID" value="NC_007626.1"/>
</dbReference>
<dbReference type="SMR" id="Q2W5H3"/>
<dbReference type="STRING" id="342108.amb2098"/>
<dbReference type="KEGG" id="mag:amb2098"/>
<dbReference type="HOGENOM" id="CLU_078938_1_0_5"/>
<dbReference type="OrthoDB" id="9788336at2"/>
<dbReference type="Proteomes" id="UP000007058">
    <property type="component" value="Chromosome"/>
</dbReference>
<dbReference type="GO" id="GO:1990904">
    <property type="term" value="C:ribonucleoprotein complex"/>
    <property type="evidence" value="ECO:0007669"/>
    <property type="project" value="UniProtKB-KW"/>
</dbReference>
<dbReference type="GO" id="GO:0005840">
    <property type="term" value="C:ribosome"/>
    <property type="evidence" value="ECO:0007669"/>
    <property type="project" value="UniProtKB-KW"/>
</dbReference>
<dbReference type="GO" id="GO:0019843">
    <property type="term" value="F:rRNA binding"/>
    <property type="evidence" value="ECO:0007669"/>
    <property type="project" value="UniProtKB-UniRule"/>
</dbReference>
<dbReference type="GO" id="GO:0003735">
    <property type="term" value="F:structural constituent of ribosome"/>
    <property type="evidence" value="ECO:0007669"/>
    <property type="project" value="InterPro"/>
</dbReference>
<dbReference type="GO" id="GO:0006412">
    <property type="term" value="P:translation"/>
    <property type="evidence" value="ECO:0007669"/>
    <property type="project" value="UniProtKB-UniRule"/>
</dbReference>
<dbReference type="Gene3D" id="3.10.430.100">
    <property type="entry name" value="Ribosomal protein L9, C-terminal domain"/>
    <property type="match status" value="1"/>
</dbReference>
<dbReference type="Gene3D" id="3.40.5.10">
    <property type="entry name" value="Ribosomal protein L9, N-terminal domain"/>
    <property type="match status" value="1"/>
</dbReference>
<dbReference type="HAMAP" id="MF_00503">
    <property type="entry name" value="Ribosomal_bL9"/>
    <property type="match status" value="1"/>
</dbReference>
<dbReference type="InterPro" id="IPR000244">
    <property type="entry name" value="Ribosomal_bL9"/>
</dbReference>
<dbReference type="InterPro" id="IPR009027">
    <property type="entry name" value="Ribosomal_bL9/RNase_H1_N"/>
</dbReference>
<dbReference type="InterPro" id="IPR020594">
    <property type="entry name" value="Ribosomal_bL9_bac/chp"/>
</dbReference>
<dbReference type="InterPro" id="IPR020069">
    <property type="entry name" value="Ribosomal_bL9_C"/>
</dbReference>
<dbReference type="InterPro" id="IPR036791">
    <property type="entry name" value="Ribosomal_bL9_C_sf"/>
</dbReference>
<dbReference type="InterPro" id="IPR020070">
    <property type="entry name" value="Ribosomal_bL9_N"/>
</dbReference>
<dbReference type="InterPro" id="IPR036935">
    <property type="entry name" value="Ribosomal_bL9_N_sf"/>
</dbReference>
<dbReference type="NCBIfam" id="TIGR00158">
    <property type="entry name" value="L9"/>
    <property type="match status" value="1"/>
</dbReference>
<dbReference type="PANTHER" id="PTHR21368">
    <property type="entry name" value="50S RIBOSOMAL PROTEIN L9"/>
    <property type="match status" value="1"/>
</dbReference>
<dbReference type="Pfam" id="PF03948">
    <property type="entry name" value="Ribosomal_L9_C"/>
    <property type="match status" value="1"/>
</dbReference>
<dbReference type="Pfam" id="PF01281">
    <property type="entry name" value="Ribosomal_L9_N"/>
    <property type="match status" value="1"/>
</dbReference>
<dbReference type="SUPFAM" id="SSF55658">
    <property type="entry name" value="L9 N-domain-like"/>
    <property type="match status" value="1"/>
</dbReference>
<dbReference type="SUPFAM" id="SSF55653">
    <property type="entry name" value="Ribosomal protein L9 C-domain"/>
    <property type="match status" value="1"/>
</dbReference>
<dbReference type="PROSITE" id="PS00651">
    <property type="entry name" value="RIBOSOMAL_L9"/>
    <property type="match status" value="1"/>
</dbReference>
<keyword id="KW-0687">Ribonucleoprotein</keyword>
<keyword id="KW-0689">Ribosomal protein</keyword>
<keyword id="KW-0694">RNA-binding</keyword>
<keyword id="KW-0699">rRNA-binding</keyword>
<name>RL9_PARM1</name>
<gene>
    <name evidence="1" type="primary">rplI</name>
    <name type="ordered locus">amb2098</name>
</gene>
<protein>
    <recommendedName>
        <fullName evidence="1">Large ribosomal subunit protein bL9</fullName>
    </recommendedName>
    <alternativeName>
        <fullName evidence="3">50S ribosomal protein L9</fullName>
    </alternativeName>
</protein>